<evidence type="ECO:0000269" key="1">
    <source>
    </source>
</evidence>
<evidence type="ECO:0000303" key="2">
    <source>
    </source>
</evidence>
<evidence type="ECO:0000305" key="3"/>
<evidence type="ECO:0000305" key="4">
    <source>
    </source>
</evidence>
<keyword id="KW-0637">Prenyltransferase</keyword>
<keyword id="KW-1185">Reference proteome</keyword>
<keyword id="KW-0808">Transferase</keyword>
<dbReference type="EC" id="2.5.1.-" evidence="4"/>
<dbReference type="EMBL" id="DS995704">
    <property type="protein sequence ID" value="EEQ32241.1"/>
    <property type="molecule type" value="Genomic_DNA"/>
</dbReference>
<dbReference type="RefSeq" id="XP_002847323.1">
    <property type="nucleotide sequence ID" value="XM_002847277.1"/>
</dbReference>
<dbReference type="SMR" id="C5FQT8"/>
<dbReference type="GeneID" id="9226178"/>
<dbReference type="VEuPathDB" id="FungiDB:MCYG_05060"/>
<dbReference type="eggNOG" id="ENOG502SMTG">
    <property type="taxonomic scope" value="Eukaryota"/>
</dbReference>
<dbReference type="HOGENOM" id="CLU_057184_0_0_1"/>
<dbReference type="OMA" id="ALNYRFY"/>
<dbReference type="OrthoDB" id="3913316at2759"/>
<dbReference type="Proteomes" id="UP000002035">
    <property type="component" value="Unassembled WGS sequence"/>
</dbReference>
<dbReference type="GO" id="GO:0004659">
    <property type="term" value="F:prenyltransferase activity"/>
    <property type="evidence" value="ECO:0007669"/>
    <property type="project" value="UniProtKB-KW"/>
</dbReference>
<dbReference type="CDD" id="cd13931">
    <property type="entry name" value="PT-CloQ_NphB"/>
    <property type="match status" value="1"/>
</dbReference>
<dbReference type="InterPro" id="IPR033964">
    <property type="entry name" value="Aro_prenylTrfase"/>
</dbReference>
<dbReference type="InterPro" id="IPR020965">
    <property type="entry name" value="Prenyltransferase_CloQ"/>
</dbReference>
<dbReference type="InterPro" id="IPR036239">
    <property type="entry name" value="PrenylTrfase-like_sf"/>
</dbReference>
<dbReference type="Pfam" id="PF11468">
    <property type="entry name" value="PTase_Orf2"/>
    <property type="match status" value="1"/>
</dbReference>
<dbReference type="SFLD" id="SFLDS00036">
    <property type="entry name" value="Aromatic_Prenyltransferase"/>
    <property type="match status" value="1"/>
</dbReference>
<dbReference type="SFLD" id="SFLDG01163">
    <property type="entry name" value="II"/>
    <property type="match status" value="1"/>
</dbReference>
<dbReference type="SUPFAM" id="SSF143492">
    <property type="entry name" value="Prenyltransferase-like"/>
    <property type="match status" value="1"/>
</dbReference>
<proteinExistence type="inferred from homology"/>
<sequence length="314" mass="35052">MPASAPQNSTTFDSARFLDDYKKTADALGAPYNESIVARTLNSFGNCFNEGTVIWRSTSRPNDKLNYRFYLRDRVDTVALAIKAGYIEESHPMARLVTCWSNLFDGETVQWCDLDPEEGVAKTWIFMKTQRSIDNILDAAEVSDCVRAHRATFHSLGLKLVHFAAVDYHGGTLNIYFTVPGPISEAQAAAYTNLSGCKPPTPDEFADLRKYLPTQRFVFAATIDYTTGKIKRVAFYALNVPGSELPETMNDRLRKFFADAPSYDKQQTKNIAWSYGNGDSKYMKGLGEECEESRAGTFGPDVGGCESFLLLLRL</sequence>
<reference key="1">
    <citation type="journal article" date="2012" name="MBio">
        <title>Comparative genome analysis of Trichophyton rubrum and related dermatophytes reveals candidate genes involved in infection.</title>
        <authorList>
            <person name="Martinez D.A."/>
            <person name="Oliver B.G."/>
            <person name="Graeser Y."/>
            <person name="Goldberg J.M."/>
            <person name="Li W."/>
            <person name="Martinez-Rossi N.M."/>
            <person name="Monod M."/>
            <person name="Shelest E."/>
            <person name="Barton R.C."/>
            <person name="Birch E."/>
            <person name="Brakhage A.A."/>
            <person name="Chen Z."/>
            <person name="Gurr S.J."/>
            <person name="Heiman D."/>
            <person name="Heitman J."/>
            <person name="Kosti I."/>
            <person name="Rossi A."/>
            <person name="Saif S."/>
            <person name="Samalova M."/>
            <person name="Saunders C.W."/>
            <person name="Shea T."/>
            <person name="Summerbell R.C."/>
            <person name="Xu J."/>
            <person name="Young S."/>
            <person name="Zeng Q."/>
            <person name="Birren B.W."/>
            <person name="Cuomo C.A."/>
            <person name="White T.C."/>
        </authorList>
    </citation>
    <scope>NUCLEOTIDE SEQUENCE [LARGE SCALE GENOMIC DNA]</scope>
    <source>
        <strain>ATCC MYA-4605 / CBS 113480</strain>
    </source>
</reference>
<reference key="2">
    <citation type="journal article" date="2010" name="J. Biol. Chem.">
        <title>A new group of aromatic prenyltransferases in fungi, catalyzing a 2,7-dihydroxynaphthalene 3-dimethylallyl-transferase reaction.</title>
        <authorList>
            <person name="Haug-Schifferdecker E."/>
            <person name="Arican D."/>
            <person name="Brueckner R."/>
            <person name="Heide L."/>
        </authorList>
    </citation>
    <scope>FUNCTION</scope>
</reference>
<protein>
    <recommendedName>
        <fullName evidence="2">Aromatic prenyltransferase</fullName>
        <ecNumber evidence="4">2.5.1.-</ecNumber>
    </recommendedName>
</protein>
<comment type="function">
    <text evidence="1">Prenyltransferase that attaches isoprenoid moieties to carbon atoms of aromatic substrates in an enzyme-catalyzed Friedel-Crafts reaction.</text>
</comment>
<comment type="miscellaneous">
    <text evidence="1">The gene is not located within a recognizable secondary metabolic gene cluster.</text>
</comment>
<comment type="similarity">
    <text evidence="3">Belongs to the aromatic prenyltransferase family.</text>
</comment>
<name>PTF_ARTOC</name>
<gene>
    <name evidence="2" type="primary">ptf</name>
    <name type="ORF">MCYG_05060</name>
</gene>
<feature type="chain" id="PRO_0000455464" description="Aromatic prenyltransferase">
    <location>
        <begin position="1"/>
        <end position="314"/>
    </location>
</feature>
<organism>
    <name type="scientific">Arthroderma otae (strain ATCC MYA-4605 / CBS 113480)</name>
    <name type="common">Microsporum canis</name>
    <dbReference type="NCBI Taxonomy" id="554155"/>
    <lineage>
        <taxon>Eukaryota</taxon>
        <taxon>Fungi</taxon>
        <taxon>Dikarya</taxon>
        <taxon>Ascomycota</taxon>
        <taxon>Pezizomycotina</taxon>
        <taxon>Eurotiomycetes</taxon>
        <taxon>Eurotiomycetidae</taxon>
        <taxon>Onygenales</taxon>
        <taxon>Arthrodermataceae</taxon>
        <taxon>Microsporum</taxon>
    </lineage>
</organism>
<accession>C5FQT8</accession>